<evidence type="ECO:0000255" key="1">
    <source>
        <dbReference type="HAMAP-Rule" id="MF_01334"/>
    </source>
</evidence>
<evidence type="ECO:0000256" key="2">
    <source>
        <dbReference type="SAM" id="MobiDB-lite"/>
    </source>
</evidence>
<evidence type="ECO:0000305" key="3"/>
<feature type="chain" id="PRO_1000142521" description="Large ribosomal subunit protein bL25">
    <location>
        <begin position="1"/>
        <end position="212"/>
    </location>
</feature>
<feature type="region of interest" description="Disordered" evidence="2">
    <location>
        <begin position="181"/>
        <end position="212"/>
    </location>
</feature>
<feature type="compositionally biased region" description="Acidic residues" evidence="2">
    <location>
        <begin position="188"/>
        <end position="197"/>
    </location>
</feature>
<keyword id="KW-1185">Reference proteome</keyword>
<keyword id="KW-0687">Ribonucleoprotein</keyword>
<keyword id="KW-0689">Ribosomal protein</keyword>
<keyword id="KW-0694">RNA-binding</keyword>
<keyword id="KW-0699">rRNA-binding</keyword>
<sequence length="212" mass="24050">MTNYKLDMQKRDKVGSNAVRKLRVKELIPGVIYGKDFEPINVTVDEKELRKVHLMAGTSSLIDVKVDGEEHTVIIKDVQKHPFKNHYVHVDFKEIKMGEVANFTIPVVLEGRDEIRLQPSVLMQLLDEVEIECLPKNLPNEAAVSVIDMQYGDTFEVKDLDVFKNPDIKVLNDETEAVCSLSEPKEEVIEEDVEEVSADVPTVSETEEEDAE</sequence>
<proteinExistence type="inferred from homology"/>
<protein>
    <recommendedName>
        <fullName evidence="1">Large ribosomal subunit protein bL25</fullName>
    </recommendedName>
    <alternativeName>
        <fullName evidence="3">50S ribosomal protein L25</fullName>
    </alternativeName>
    <alternativeName>
        <fullName evidence="1">General stress protein CTC</fullName>
    </alternativeName>
</protein>
<comment type="function">
    <text evidence="1">This is one of the proteins that binds to the 5S RNA in the ribosome where it forms part of the central protuberance.</text>
</comment>
<comment type="subunit">
    <text evidence="1">Part of the 50S ribosomal subunit; part of the 5S rRNA/L5/L18/L25 subcomplex. Contacts the 5S rRNA. Binds to the 5S rRNA independently of L5 and L18.</text>
</comment>
<comment type="similarity">
    <text evidence="1">Belongs to the bacterial ribosomal protein bL25 family. CTC subfamily.</text>
</comment>
<organism>
    <name type="scientific">Finegoldia magna (strain ATCC 29328 / DSM 20472 / WAL 2508)</name>
    <name type="common">Peptostreptococcus magnus</name>
    <dbReference type="NCBI Taxonomy" id="334413"/>
    <lineage>
        <taxon>Bacteria</taxon>
        <taxon>Bacillati</taxon>
        <taxon>Bacillota</taxon>
        <taxon>Tissierellia</taxon>
        <taxon>Tissierellales</taxon>
        <taxon>Peptoniphilaceae</taxon>
        <taxon>Finegoldia</taxon>
    </lineage>
</organism>
<dbReference type="EMBL" id="AP008971">
    <property type="protein sequence ID" value="BAG08548.1"/>
    <property type="molecule type" value="Genomic_DNA"/>
</dbReference>
<dbReference type="RefSeq" id="WP_002837265.1">
    <property type="nucleotide sequence ID" value="NC_010376.1"/>
</dbReference>
<dbReference type="SMR" id="B0S2F8"/>
<dbReference type="STRING" id="334413.FMG_1130"/>
<dbReference type="KEGG" id="fma:FMG_1130"/>
<dbReference type="eggNOG" id="COG1825">
    <property type="taxonomic scope" value="Bacteria"/>
</dbReference>
<dbReference type="HOGENOM" id="CLU_075939_2_0_9"/>
<dbReference type="Proteomes" id="UP000001319">
    <property type="component" value="Chromosome"/>
</dbReference>
<dbReference type="GO" id="GO:0022625">
    <property type="term" value="C:cytosolic large ribosomal subunit"/>
    <property type="evidence" value="ECO:0007669"/>
    <property type="project" value="TreeGrafter"/>
</dbReference>
<dbReference type="GO" id="GO:0008097">
    <property type="term" value="F:5S rRNA binding"/>
    <property type="evidence" value="ECO:0007669"/>
    <property type="project" value="InterPro"/>
</dbReference>
<dbReference type="GO" id="GO:0003735">
    <property type="term" value="F:structural constituent of ribosome"/>
    <property type="evidence" value="ECO:0007669"/>
    <property type="project" value="InterPro"/>
</dbReference>
<dbReference type="GO" id="GO:0006412">
    <property type="term" value="P:translation"/>
    <property type="evidence" value="ECO:0007669"/>
    <property type="project" value="UniProtKB-UniRule"/>
</dbReference>
<dbReference type="CDD" id="cd00495">
    <property type="entry name" value="Ribosomal_L25_TL5_CTC"/>
    <property type="match status" value="1"/>
</dbReference>
<dbReference type="Gene3D" id="2.170.120.20">
    <property type="entry name" value="Ribosomal protein L25, beta domain"/>
    <property type="match status" value="1"/>
</dbReference>
<dbReference type="Gene3D" id="2.40.240.10">
    <property type="entry name" value="Ribosomal Protein L25, Chain P"/>
    <property type="match status" value="1"/>
</dbReference>
<dbReference type="HAMAP" id="MF_01334">
    <property type="entry name" value="Ribosomal_bL25_CTC"/>
    <property type="match status" value="1"/>
</dbReference>
<dbReference type="InterPro" id="IPR020056">
    <property type="entry name" value="Rbsml_bL25/Gln-tRNA_synth_N"/>
</dbReference>
<dbReference type="InterPro" id="IPR011035">
    <property type="entry name" value="Ribosomal_bL25/Gln-tRNA_synth"/>
</dbReference>
<dbReference type="InterPro" id="IPR020057">
    <property type="entry name" value="Ribosomal_bL25_b-dom"/>
</dbReference>
<dbReference type="InterPro" id="IPR037121">
    <property type="entry name" value="Ribosomal_bL25_C"/>
</dbReference>
<dbReference type="InterPro" id="IPR001021">
    <property type="entry name" value="Ribosomal_bL25_long"/>
</dbReference>
<dbReference type="InterPro" id="IPR029751">
    <property type="entry name" value="Ribosomal_L25_dom"/>
</dbReference>
<dbReference type="InterPro" id="IPR020930">
    <property type="entry name" value="Ribosomal_uL5_bac-type"/>
</dbReference>
<dbReference type="NCBIfam" id="TIGR00731">
    <property type="entry name" value="bL25_bact_ctc"/>
    <property type="match status" value="1"/>
</dbReference>
<dbReference type="NCBIfam" id="NF004612">
    <property type="entry name" value="PRK05943.1"/>
    <property type="match status" value="1"/>
</dbReference>
<dbReference type="PANTHER" id="PTHR33284">
    <property type="entry name" value="RIBOSOMAL PROTEIN L25/GLN-TRNA SYNTHETASE, ANTI-CODON-BINDING DOMAIN-CONTAINING PROTEIN"/>
    <property type="match status" value="1"/>
</dbReference>
<dbReference type="PANTHER" id="PTHR33284:SF1">
    <property type="entry name" value="RIBOSOMAL PROTEIN L25_GLN-TRNA SYNTHETASE, ANTI-CODON-BINDING DOMAIN-CONTAINING PROTEIN"/>
    <property type="match status" value="1"/>
</dbReference>
<dbReference type="Pfam" id="PF01386">
    <property type="entry name" value="Ribosomal_L25p"/>
    <property type="match status" value="1"/>
</dbReference>
<dbReference type="Pfam" id="PF14693">
    <property type="entry name" value="Ribosomal_TL5_C"/>
    <property type="match status" value="1"/>
</dbReference>
<dbReference type="SUPFAM" id="SSF50715">
    <property type="entry name" value="Ribosomal protein L25-like"/>
    <property type="match status" value="1"/>
</dbReference>
<name>RL25_FINM2</name>
<accession>B0S2F8</accession>
<reference key="1">
    <citation type="journal article" date="2008" name="DNA Res.">
        <title>Complete genome sequence of Finegoldia magna, an anaerobic opportunistic pathogen.</title>
        <authorList>
            <person name="Goto T."/>
            <person name="Yamashita A."/>
            <person name="Hirakawa H."/>
            <person name="Matsutani M."/>
            <person name="Todo K."/>
            <person name="Ohshima K."/>
            <person name="Toh H."/>
            <person name="Miyamoto K."/>
            <person name="Kuhara S."/>
            <person name="Hattori M."/>
            <person name="Shimizu T."/>
            <person name="Akimoto S."/>
        </authorList>
    </citation>
    <scope>NUCLEOTIDE SEQUENCE [LARGE SCALE GENOMIC DNA]</scope>
    <source>
        <strain>ATCC 29328 / DSM 20472 / WAL 2508</strain>
    </source>
</reference>
<gene>
    <name evidence="1" type="primary">rplY</name>
    <name evidence="1" type="synonym">ctc</name>
    <name type="ordered locus">FMG_1130</name>
</gene>